<reference key="1">
    <citation type="journal article" date="1995" name="Microbiology">
        <title>Determination of a 21548 bp nucleotide sequence around the 24 degrees region of the Bacillus subtilis chromosome.</title>
        <authorList>
            <person name="Ogawa K."/>
            <person name="Akagawa E."/>
            <person name="Nakamura K."/>
            <person name="Yamane K."/>
        </authorList>
    </citation>
    <scope>NUCLEOTIDE SEQUENCE [GENOMIC DNA]</scope>
    <source>
        <strain>168</strain>
    </source>
</reference>
<reference key="2">
    <citation type="journal article" date="1997" name="Nature">
        <title>The complete genome sequence of the Gram-positive bacterium Bacillus subtilis.</title>
        <authorList>
            <person name="Kunst F."/>
            <person name="Ogasawara N."/>
            <person name="Moszer I."/>
            <person name="Albertini A.M."/>
            <person name="Alloni G."/>
            <person name="Azevedo V."/>
            <person name="Bertero M.G."/>
            <person name="Bessieres P."/>
            <person name="Bolotin A."/>
            <person name="Borchert S."/>
            <person name="Borriss R."/>
            <person name="Boursier L."/>
            <person name="Brans A."/>
            <person name="Braun M."/>
            <person name="Brignell S.C."/>
            <person name="Bron S."/>
            <person name="Brouillet S."/>
            <person name="Bruschi C.V."/>
            <person name="Caldwell B."/>
            <person name="Capuano V."/>
            <person name="Carter N.M."/>
            <person name="Choi S.-K."/>
            <person name="Codani J.-J."/>
            <person name="Connerton I.F."/>
            <person name="Cummings N.J."/>
            <person name="Daniel R.A."/>
            <person name="Denizot F."/>
            <person name="Devine K.M."/>
            <person name="Duesterhoeft A."/>
            <person name="Ehrlich S.D."/>
            <person name="Emmerson P.T."/>
            <person name="Entian K.-D."/>
            <person name="Errington J."/>
            <person name="Fabret C."/>
            <person name="Ferrari E."/>
            <person name="Foulger D."/>
            <person name="Fritz C."/>
            <person name="Fujita M."/>
            <person name="Fujita Y."/>
            <person name="Fuma S."/>
            <person name="Galizzi A."/>
            <person name="Galleron N."/>
            <person name="Ghim S.-Y."/>
            <person name="Glaser P."/>
            <person name="Goffeau A."/>
            <person name="Golightly E.J."/>
            <person name="Grandi G."/>
            <person name="Guiseppi G."/>
            <person name="Guy B.J."/>
            <person name="Haga K."/>
            <person name="Haiech J."/>
            <person name="Harwood C.R."/>
            <person name="Henaut A."/>
            <person name="Hilbert H."/>
            <person name="Holsappel S."/>
            <person name="Hosono S."/>
            <person name="Hullo M.-F."/>
            <person name="Itaya M."/>
            <person name="Jones L.-M."/>
            <person name="Joris B."/>
            <person name="Karamata D."/>
            <person name="Kasahara Y."/>
            <person name="Klaerr-Blanchard M."/>
            <person name="Klein C."/>
            <person name="Kobayashi Y."/>
            <person name="Koetter P."/>
            <person name="Koningstein G."/>
            <person name="Krogh S."/>
            <person name="Kumano M."/>
            <person name="Kurita K."/>
            <person name="Lapidus A."/>
            <person name="Lardinois S."/>
            <person name="Lauber J."/>
            <person name="Lazarevic V."/>
            <person name="Lee S.-M."/>
            <person name="Levine A."/>
            <person name="Liu H."/>
            <person name="Masuda S."/>
            <person name="Mauel C."/>
            <person name="Medigue C."/>
            <person name="Medina N."/>
            <person name="Mellado R.P."/>
            <person name="Mizuno M."/>
            <person name="Moestl D."/>
            <person name="Nakai S."/>
            <person name="Noback M."/>
            <person name="Noone D."/>
            <person name="O'Reilly M."/>
            <person name="Ogawa K."/>
            <person name="Ogiwara A."/>
            <person name="Oudega B."/>
            <person name="Park S.-H."/>
            <person name="Parro V."/>
            <person name="Pohl T.M."/>
            <person name="Portetelle D."/>
            <person name="Porwollik S."/>
            <person name="Prescott A.M."/>
            <person name="Presecan E."/>
            <person name="Pujic P."/>
            <person name="Purnelle B."/>
            <person name="Rapoport G."/>
            <person name="Rey M."/>
            <person name="Reynolds S."/>
            <person name="Rieger M."/>
            <person name="Rivolta C."/>
            <person name="Rocha E."/>
            <person name="Roche B."/>
            <person name="Rose M."/>
            <person name="Sadaie Y."/>
            <person name="Sato T."/>
            <person name="Scanlan E."/>
            <person name="Schleich S."/>
            <person name="Schroeter R."/>
            <person name="Scoffone F."/>
            <person name="Sekiguchi J."/>
            <person name="Sekowska A."/>
            <person name="Seror S.J."/>
            <person name="Serror P."/>
            <person name="Shin B.-S."/>
            <person name="Soldo B."/>
            <person name="Sorokin A."/>
            <person name="Tacconi E."/>
            <person name="Takagi T."/>
            <person name="Takahashi H."/>
            <person name="Takemaru K."/>
            <person name="Takeuchi M."/>
            <person name="Tamakoshi A."/>
            <person name="Tanaka T."/>
            <person name="Terpstra P."/>
            <person name="Tognoni A."/>
            <person name="Tosato V."/>
            <person name="Uchiyama S."/>
            <person name="Vandenbol M."/>
            <person name="Vannier F."/>
            <person name="Vassarotti A."/>
            <person name="Viari A."/>
            <person name="Wambutt R."/>
            <person name="Wedler E."/>
            <person name="Wedler H."/>
            <person name="Weitzenegger T."/>
            <person name="Winters P."/>
            <person name="Wipat A."/>
            <person name="Yamamoto H."/>
            <person name="Yamane K."/>
            <person name="Yasumoto K."/>
            <person name="Yata K."/>
            <person name="Yoshida K."/>
            <person name="Yoshikawa H.-F."/>
            <person name="Zumstein E."/>
            <person name="Yoshikawa H."/>
            <person name="Danchin A."/>
        </authorList>
    </citation>
    <scope>NUCLEOTIDE SEQUENCE [LARGE SCALE GENOMIC DNA]</scope>
    <source>
        <strain>168</strain>
    </source>
</reference>
<proteinExistence type="inferred from homology"/>
<evidence type="ECO:0000255" key="1"/>
<evidence type="ECO:0000305" key="2"/>
<feature type="chain" id="PRO_0000108178" description="Uncharacterized transporter YcbK">
    <location>
        <begin position="1"/>
        <end position="312"/>
    </location>
</feature>
<feature type="transmembrane region" description="Helical" evidence="1">
    <location>
        <begin position="13"/>
        <end position="33"/>
    </location>
</feature>
<feature type="transmembrane region" description="Helical" evidence="1">
    <location>
        <begin position="45"/>
        <end position="65"/>
    </location>
</feature>
<feature type="transmembrane region" description="Helical" evidence="1">
    <location>
        <begin position="81"/>
        <end position="101"/>
    </location>
</feature>
<feature type="transmembrane region" description="Helical" evidence="1">
    <location>
        <begin position="105"/>
        <end position="125"/>
    </location>
</feature>
<feature type="transmembrane region" description="Helical" evidence="1">
    <location>
        <begin position="133"/>
        <end position="153"/>
    </location>
</feature>
<feature type="transmembrane region" description="Helical" evidence="1">
    <location>
        <begin position="162"/>
        <end position="182"/>
    </location>
</feature>
<feature type="transmembrane region" description="Helical" evidence="1">
    <location>
        <begin position="198"/>
        <end position="218"/>
    </location>
</feature>
<feature type="transmembrane region" description="Helical" evidence="1">
    <location>
        <begin position="229"/>
        <end position="249"/>
    </location>
</feature>
<feature type="transmembrane region" description="Helical" evidence="1">
    <location>
        <begin position="260"/>
        <end position="280"/>
    </location>
</feature>
<feature type="transmembrane region" description="Helical" evidence="1">
    <location>
        <begin position="283"/>
        <end position="303"/>
    </location>
</feature>
<feature type="domain" description="EamA">
    <location>
        <begin position="173"/>
        <end position="303"/>
    </location>
</feature>
<accession>P42243</accession>
<organism>
    <name type="scientific">Bacillus subtilis (strain 168)</name>
    <dbReference type="NCBI Taxonomy" id="224308"/>
    <lineage>
        <taxon>Bacteria</taxon>
        <taxon>Bacillati</taxon>
        <taxon>Bacillota</taxon>
        <taxon>Bacilli</taxon>
        <taxon>Bacillales</taxon>
        <taxon>Bacillaceae</taxon>
        <taxon>Bacillus</taxon>
    </lineage>
</organism>
<keyword id="KW-1003">Cell membrane</keyword>
<keyword id="KW-0472">Membrane</keyword>
<keyword id="KW-1185">Reference proteome</keyword>
<keyword id="KW-0812">Transmembrane</keyword>
<keyword id="KW-1133">Transmembrane helix</keyword>
<keyword id="KW-0813">Transport</keyword>
<gene>
    <name type="primary">ycbK</name>
    <name type="ordered locus">BSU02540</name>
</gene>
<protein>
    <recommendedName>
        <fullName>Uncharacterized transporter YcbK</fullName>
    </recommendedName>
</protein>
<dbReference type="EMBL" id="D30808">
    <property type="protein sequence ID" value="BAA06475.1"/>
    <property type="molecule type" value="Genomic_DNA"/>
</dbReference>
<dbReference type="EMBL" id="AL009126">
    <property type="protein sequence ID" value="CAB12048.1"/>
    <property type="molecule type" value="Genomic_DNA"/>
</dbReference>
<dbReference type="PIR" id="E69753">
    <property type="entry name" value="E69753"/>
</dbReference>
<dbReference type="RefSeq" id="NP_388136.1">
    <property type="nucleotide sequence ID" value="NC_000964.3"/>
</dbReference>
<dbReference type="RefSeq" id="WP_003246325.1">
    <property type="nucleotide sequence ID" value="NZ_OZ025638.1"/>
</dbReference>
<dbReference type="SMR" id="P42243"/>
<dbReference type="FunCoup" id="P42243">
    <property type="interactions" value="43"/>
</dbReference>
<dbReference type="STRING" id="224308.BSU02540"/>
<dbReference type="TCDB" id="2.A.7.3.74">
    <property type="family name" value="the drug/metabolite transporter (dmt) superfamily"/>
</dbReference>
<dbReference type="PaxDb" id="224308-BSU02540"/>
<dbReference type="EnsemblBacteria" id="CAB12048">
    <property type="protein sequence ID" value="CAB12048"/>
    <property type="gene ID" value="BSU_02540"/>
</dbReference>
<dbReference type="GeneID" id="938405"/>
<dbReference type="KEGG" id="bsu:BSU02540"/>
<dbReference type="PATRIC" id="fig|224308.179.peg.262"/>
<dbReference type="eggNOG" id="COG0697">
    <property type="taxonomic scope" value="Bacteria"/>
</dbReference>
<dbReference type="InParanoid" id="P42243"/>
<dbReference type="OrthoDB" id="2896277at2"/>
<dbReference type="PhylomeDB" id="P42243"/>
<dbReference type="BioCyc" id="BSUB:BSU02540-MONOMER"/>
<dbReference type="Proteomes" id="UP000001570">
    <property type="component" value="Chromosome"/>
</dbReference>
<dbReference type="GO" id="GO:0016020">
    <property type="term" value="C:membrane"/>
    <property type="evidence" value="ECO:0000318"/>
    <property type="project" value="GO_Central"/>
</dbReference>
<dbReference type="GO" id="GO:0005886">
    <property type="term" value="C:plasma membrane"/>
    <property type="evidence" value="ECO:0007669"/>
    <property type="project" value="UniProtKB-SubCell"/>
</dbReference>
<dbReference type="InterPro" id="IPR051258">
    <property type="entry name" value="Diverse_Substrate_Transporter"/>
</dbReference>
<dbReference type="InterPro" id="IPR000620">
    <property type="entry name" value="EamA_dom"/>
</dbReference>
<dbReference type="PANTHER" id="PTHR42920:SF5">
    <property type="entry name" value="EAMA DOMAIN-CONTAINING PROTEIN"/>
    <property type="match status" value="1"/>
</dbReference>
<dbReference type="PANTHER" id="PTHR42920">
    <property type="entry name" value="OS03G0707200 PROTEIN-RELATED"/>
    <property type="match status" value="1"/>
</dbReference>
<dbReference type="Pfam" id="PF00892">
    <property type="entry name" value="EamA"/>
    <property type="match status" value="2"/>
</dbReference>
<dbReference type="SUPFAM" id="SSF103481">
    <property type="entry name" value="Multidrug resistance efflux transporter EmrE"/>
    <property type="match status" value="2"/>
</dbReference>
<sequence>MRAEEQSKIREAAAGTIFLLIGTVCFASKSIWIKWAYQMGAEPDAVLLYRQLLAVPLFWLIFLIYRPPMPDGKKKGDLWKACGAGVFCFFLSPLLDFIGLNHVSAMVERILLMSYPLFVFGFTACRDRKMSSIQDLFAVLAVMFGLFLALGGWNAELFQANMIGAVFILLSSAVYAGYLVLSGHLVHQIGGIRLNAYGMTAAGAAMMLYTGIKSAAGMNTPMAAYPLSMYGLFAVIAVVTTVIPFVLMLEGIKRIGAQRAAAISMAGPILTIFYGALFLGERLGLIQVIGCGGVFFVITGMEYRKLKTGKKE</sequence>
<comment type="subcellular location">
    <subcellularLocation>
        <location evidence="2">Cell membrane</location>
        <topology evidence="2">Multi-pass membrane protein</topology>
    </subcellularLocation>
</comment>
<comment type="similarity">
    <text evidence="2">Belongs to the EamA transporter family.</text>
</comment>
<name>YCBK_BACSU</name>